<organism>
    <name type="scientific">Xanthomonas axonopodis pv. citri (strain 306)</name>
    <dbReference type="NCBI Taxonomy" id="190486"/>
    <lineage>
        <taxon>Bacteria</taxon>
        <taxon>Pseudomonadati</taxon>
        <taxon>Pseudomonadota</taxon>
        <taxon>Gammaproteobacteria</taxon>
        <taxon>Lysobacterales</taxon>
        <taxon>Lysobacteraceae</taxon>
        <taxon>Xanthomonas</taxon>
    </lineage>
</organism>
<evidence type="ECO:0000255" key="1">
    <source>
        <dbReference type="HAMAP-Rule" id="MF_00358"/>
    </source>
</evidence>
<evidence type="ECO:0000256" key="2">
    <source>
        <dbReference type="SAM" id="MobiDB-lite"/>
    </source>
</evidence>
<evidence type="ECO:0000305" key="3"/>
<protein>
    <recommendedName>
        <fullName evidence="1">Small ribosomal subunit protein bS21</fullName>
    </recommendedName>
    <alternativeName>
        <fullName evidence="3">30S ribosomal protein S21</fullName>
    </alternativeName>
</protein>
<comment type="similarity">
    <text evidence="1">Belongs to the bacterial ribosomal protein bS21 family.</text>
</comment>
<sequence>MPSVKVRENEPFEFALRRFKRTCEKAGVLAETRKREFYEKPTQERKRKAAAAVKRQLRRSSRDVTKRQRLY</sequence>
<accession>P66535</accession>
<accession>Q8NL04</accession>
<gene>
    <name evidence="1" type="primary">rpsU</name>
    <name type="ordered locus">XAC3872</name>
</gene>
<dbReference type="EMBL" id="AE008923">
    <property type="protein sequence ID" value="AAM38714.1"/>
    <property type="molecule type" value="Genomic_DNA"/>
</dbReference>
<dbReference type="RefSeq" id="WP_002808376.1">
    <property type="nucleotide sequence ID" value="NC_003919.1"/>
</dbReference>
<dbReference type="SMR" id="P66535"/>
<dbReference type="GeneID" id="97512051"/>
<dbReference type="KEGG" id="xac:XAC3872"/>
<dbReference type="eggNOG" id="COG0828">
    <property type="taxonomic scope" value="Bacteria"/>
</dbReference>
<dbReference type="HOGENOM" id="CLU_159258_1_0_6"/>
<dbReference type="Proteomes" id="UP000000576">
    <property type="component" value="Chromosome"/>
</dbReference>
<dbReference type="GO" id="GO:1990904">
    <property type="term" value="C:ribonucleoprotein complex"/>
    <property type="evidence" value="ECO:0007669"/>
    <property type="project" value="UniProtKB-KW"/>
</dbReference>
<dbReference type="GO" id="GO:0005840">
    <property type="term" value="C:ribosome"/>
    <property type="evidence" value="ECO:0007669"/>
    <property type="project" value="UniProtKB-KW"/>
</dbReference>
<dbReference type="GO" id="GO:0003735">
    <property type="term" value="F:structural constituent of ribosome"/>
    <property type="evidence" value="ECO:0007669"/>
    <property type="project" value="InterPro"/>
</dbReference>
<dbReference type="GO" id="GO:0006412">
    <property type="term" value="P:translation"/>
    <property type="evidence" value="ECO:0007669"/>
    <property type="project" value="UniProtKB-UniRule"/>
</dbReference>
<dbReference type="Gene3D" id="1.20.5.1150">
    <property type="entry name" value="Ribosomal protein S8"/>
    <property type="match status" value="1"/>
</dbReference>
<dbReference type="HAMAP" id="MF_00358">
    <property type="entry name" value="Ribosomal_bS21"/>
    <property type="match status" value="1"/>
</dbReference>
<dbReference type="InterPro" id="IPR001911">
    <property type="entry name" value="Ribosomal_bS21"/>
</dbReference>
<dbReference type="InterPro" id="IPR018278">
    <property type="entry name" value="Ribosomal_bS21_CS"/>
</dbReference>
<dbReference type="InterPro" id="IPR038380">
    <property type="entry name" value="Ribosomal_bS21_sf"/>
</dbReference>
<dbReference type="NCBIfam" id="TIGR00030">
    <property type="entry name" value="S21p"/>
    <property type="match status" value="1"/>
</dbReference>
<dbReference type="PANTHER" id="PTHR21109">
    <property type="entry name" value="MITOCHONDRIAL 28S RIBOSOMAL PROTEIN S21"/>
    <property type="match status" value="1"/>
</dbReference>
<dbReference type="PANTHER" id="PTHR21109:SF22">
    <property type="entry name" value="SMALL RIBOSOMAL SUBUNIT PROTEIN BS21"/>
    <property type="match status" value="1"/>
</dbReference>
<dbReference type="Pfam" id="PF01165">
    <property type="entry name" value="Ribosomal_S21"/>
    <property type="match status" value="1"/>
</dbReference>
<dbReference type="PRINTS" id="PR00976">
    <property type="entry name" value="RIBOSOMALS21"/>
</dbReference>
<dbReference type="PROSITE" id="PS01181">
    <property type="entry name" value="RIBOSOMAL_S21"/>
    <property type="match status" value="1"/>
</dbReference>
<keyword id="KW-0687">Ribonucleoprotein</keyword>
<keyword id="KW-0689">Ribosomal protein</keyword>
<reference key="1">
    <citation type="journal article" date="2002" name="Nature">
        <title>Comparison of the genomes of two Xanthomonas pathogens with differing host specificities.</title>
        <authorList>
            <person name="da Silva A.C.R."/>
            <person name="Ferro J.A."/>
            <person name="Reinach F.C."/>
            <person name="Farah C.S."/>
            <person name="Furlan L.R."/>
            <person name="Quaggio R.B."/>
            <person name="Monteiro-Vitorello C.B."/>
            <person name="Van Sluys M.A."/>
            <person name="Almeida N.F. Jr."/>
            <person name="Alves L.M.C."/>
            <person name="do Amaral A.M."/>
            <person name="Bertolini M.C."/>
            <person name="Camargo L.E.A."/>
            <person name="Camarotte G."/>
            <person name="Cannavan F."/>
            <person name="Cardozo J."/>
            <person name="Chambergo F."/>
            <person name="Ciapina L.P."/>
            <person name="Cicarelli R.M.B."/>
            <person name="Coutinho L.L."/>
            <person name="Cursino-Santos J.R."/>
            <person name="El-Dorry H."/>
            <person name="Faria J.B."/>
            <person name="Ferreira A.J.S."/>
            <person name="Ferreira R.C.C."/>
            <person name="Ferro M.I.T."/>
            <person name="Formighieri E.F."/>
            <person name="Franco M.C."/>
            <person name="Greggio C.C."/>
            <person name="Gruber A."/>
            <person name="Katsuyama A.M."/>
            <person name="Kishi L.T."/>
            <person name="Leite R.P."/>
            <person name="Lemos E.G.M."/>
            <person name="Lemos M.V.F."/>
            <person name="Locali E.C."/>
            <person name="Machado M.A."/>
            <person name="Madeira A.M.B.N."/>
            <person name="Martinez-Rossi N.M."/>
            <person name="Martins E.C."/>
            <person name="Meidanis J."/>
            <person name="Menck C.F.M."/>
            <person name="Miyaki C.Y."/>
            <person name="Moon D.H."/>
            <person name="Moreira L.M."/>
            <person name="Novo M.T.M."/>
            <person name="Okura V.K."/>
            <person name="Oliveira M.C."/>
            <person name="Oliveira V.R."/>
            <person name="Pereira H.A."/>
            <person name="Rossi A."/>
            <person name="Sena J.A.D."/>
            <person name="Silva C."/>
            <person name="de Souza R.F."/>
            <person name="Spinola L.A.F."/>
            <person name="Takita M.A."/>
            <person name="Tamura R.E."/>
            <person name="Teixeira E.C."/>
            <person name="Tezza R.I.D."/>
            <person name="Trindade dos Santos M."/>
            <person name="Truffi D."/>
            <person name="Tsai S.M."/>
            <person name="White F.F."/>
            <person name="Setubal J.C."/>
            <person name="Kitajima J.P."/>
        </authorList>
    </citation>
    <scope>NUCLEOTIDE SEQUENCE [LARGE SCALE GENOMIC DNA]</scope>
    <source>
        <strain>306</strain>
    </source>
</reference>
<name>RS21_XANAC</name>
<feature type="chain" id="PRO_0000178405" description="Small ribosomal subunit protein bS21">
    <location>
        <begin position="1"/>
        <end position="71"/>
    </location>
</feature>
<feature type="region of interest" description="Disordered" evidence="2">
    <location>
        <begin position="39"/>
        <end position="71"/>
    </location>
</feature>
<feature type="compositionally biased region" description="Basic residues" evidence="2">
    <location>
        <begin position="45"/>
        <end position="59"/>
    </location>
</feature>
<feature type="compositionally biased region" description="Basic and acidic residues" evidence="2">
    <location>
        <begin position="60"/>
        <end position="71"/>
    </location>
</feature>
<proteinExistence type="inferred from homology"/>